<gene>
    <name type="primary">Xrcc5</name>
    <name type="synonym">G22p2</name>
</gene>
<dbReference type="EC" id="3.6.4.-"/>
<dbReference type="EMBL" id="X66323">
    <property type="protein sequence ID" value="CAA46999.1"/>
    <property type="molecule type" value="mRNA"/>
</dbReference>
<dbReference type="EMBL" id="AF166486">
    <property type="protein sequence ID" value="AAD49720.1"/>
    <property type="molecule type" value="mRNA"/>
</dbReference>
<dbReference type="EMBL" id="AK081633">
    <property type="protein sequence ID" value="BAC38276.1"/>
    <property type="molecule type" value="mRNA"/>
</dbReference>
<dbReference type="EMBL" id="AK165470">
    <property type="protein sequence ID" value="BAE38207.1"/>
    <property type="molecule type" value="mRNA"/>
</dbReference>
<dbReference type="EMBL" id="AK167312">
    <property type="protein sequence ID" value="BAE39415.1"/>
    <property type="molecule type" value="mRNA"/>
</dbReference>
<dbReference type="EMBL" id="AK168913">
    <property type="protein sequence ID" value="BAE40726.1"/>
    <property type="molecule type" value="mRNA"/>
</dbReference>
<dbReference type="EMBL" id="AK169838">
    <property type="protein sequence ID" value="BAE41402.1"/>
    <property type="molecule type" value="mRNA"/>
</dbReference>
<dbReference type="EMBL" id="BC029218">
    <property type="protein sequence ID" value="AAH29218.1"/>
    <property type="molecule type" value="mRNA"/>
</dbReference>
<dbReference type="EMBL" id="BC051660">
    <property type="protein sequence ID" value="AAH51660.1"/>
    <property type="molecule type" value="mRNA"/>
</dbReference>
<dbReference type="CCDS" id="CCDS35608.1"/>
<dbReference type="PIR" id="S26303">
    <property type="entry name" value="S26303"/>
</dbReference>
<dbReference type="RefSeq" id="NP_033559.2">
    <property type="nucleotide sequence ID" value="NM_009533.2"/>
</dbReference>
<dbReference type="SMR" id="P27641"/>
<dbReference type="BioGRID" id="204608">
    <property type="interactions" value="21"/>
</dbReference>
<dbReference type="ComplexPortal" id="CPX-2047">
    <property type="entry name" value="Ku70:Ku80 complex"/>
</dbReference>
<dbReference type="CORUM" id="P27641"/>
<dbReference type="FunCoup" id="P27641">
    <property type="interactions" value="3045"/>
</dbReference>
<dbReference type="IntAct" id="P27641">
    <property type="interactions" value="6"/>
</dbReference>
<dbReference type="MINT" id="P27641"/>
<dbReference type="STRING" id="10090.ENSMUSP00000027379"/>
<dbReference type="iPTMnet" id="P27641"/>
<dbReference type="PhosphoSitePlus" id="P27641"/>
<dbReference type="SwissPalm" id="P27641"/>
<dbReference type="jPOST" id="P27641"/>
<dbReference type="PaxDb" id="10090-ENSMUSP00000027379"/>
<dbReference type="PeptideAtlas" id="P27641"/>
<dbReference type="ProteomicsDB" id="275224"/>
<dbReference type="Pumba" id="P27641"/>
<dbReference type="Antibodypedia" id="3849">
    <property type="antibodies" value="1220 antibodies from 47 providers"/>
</dbReference>
<dbReference type="DNASU" id="22596"/>
<dbReference type="Ensembl" id="ENSMUST00000027379.10">
    <property type="protein sequence ID" value="ENSMUSP00000027379.9"/>
    <property type="gene ID" value="ENSMUSG00000026187.10"/>
</dbReference>
<dbReference type="GeneID" id="22596"/>
<dbReference type="KEGG" id="mmu:22596"/>
<dbReference type="UCSC" id="uc007bkl.2">
    <property type="organism name" value="mouse"/>
</dbReference>
<dbReference type="AGR" id="MGI:104517"/>
<dbReference type="CTD" id="7520"/>
<dbReference type="MGI" id="MGI:104517">
    <property type="gene designation" value="Xrcc5"/>
</dbReference>
<dbReference type="VEuPathDB" id="HostDB:ENSMUSG00000026187"/>
<dbReference type="eggNOG" id="KOG2326">
    <property type="taxonomic scope" value="Eukaryota"/>
</dbReference>
<dbReference type="GeneTree" id="ENSGT00940000153239"/>
<dbReference type="HOGENOM" id="CLU_010975_2_1_1"/>
<dbReference type="InParanoid" id="P27641"/>
<dbReference type="OMA" id="MASNKEC"/>
<dbReference type="OrthoDB" id="30826at2759"/>
<dbReference type="PhylomeDB" id="P27641"/>
<dbReference type="TreeFam" id="TF101205"/>
<dbReference type="Reactome" id="R-MMU-5693571">
    <property type="pathway name" value="Nonhomologous End-Joining (NHEJ)"/>
</dbReference>
<dbReference type="Reactome" id="R-MMU-6798695">
    <property type="pathway name" value="Neutrophil degranulation"/>
</dbReference>
<dbReference type="BioGRID-ORCS" id="22596">
    <property type="hits" value="20 hits in 117 CRISPR screens"/>
</dbReference>
<dbReference type="CD-CODE" id="01CA17F3">
    <property type="entry name" value="Centrosome"/>
</dbReference>
<dbReference type="ChiTaRS" id="Xrcc5">
    <property type="organism name" value="mouse"/>
</dbReference>
<dbReference type="PRO" id="PR:P27641"/>
<dbReference type="Proteomes" id="UP000000589">
    <property type="component" value="Chromosome 1"/>
</dbReference>
<dbReference type="RNAct" id="P27641">
    <property type="molecule type" value="protein"/>
</dbReference>
<dbReference type="Bgee" id="ENSMUSG00000026187">
    <property type="expression patterns" value="Expressed in saccule of membranous labyrinth and 250 other cell types or tissues"/>
</dbReference>
<dbReference type="GO" id="GO:0000781">
    <property type="term" value="C:chromosome, telomeric region"/>
    <property type="evidence" value="ECO:0007669"/>
    <property type="project" value="Ensembl"/>
</dbReference>
<dbReference type="GO" id="GO:0005737">
    <property type="term" value="C:cytoplasm"/>
    <property type="evidence" value="ECO:0000314"/>
    <property type="project" value="MGI"/>
</dbReference>
<dbReference type="GO" id="GO:0070418">
    <property type="term" value="C:DNA-dependent protein kinase complex"/>
    <property type="evidence" value="ECO:0000266"/>
    <property type="project" value="ComplexPortal"/>
</dbReference>
<dbReference type="GO" id="GO:0005958">
    <property type="term" value="C:DNA-dependent protein kinase-DNA ligase 4 complex"/>
    <property type="evidence" value="ECO:0007669"/>
    <property type="project" value="Ensembl"/>
</dbReference>
<dbReference type="GO" id="GO:0043564">
    <property type="term" value="C:Ku70:Ku80 complex"/>
    <property type="evidence" value="ECO:0000250"/>
    <property type="project" value="UniProtKB"/>
</dbReference>
<dbReference type="GO" id="GO:0070419">
    <property type="term" value="C:nonhomologous end joining complex"/>
    <property type="evidence" value="ECO:0000250"/>
    <property type="project" value="UniProtKB"/>
</dbReference>
<dbReference type="GO" id="GO:0005730">
    <property type="term" value="C:nucleolus"/>
    <property type="evidence" value="ECO:0007669"/>
    <property type="project" value="UniProtKB-SubCell"/>
</dbReference>
<dbReference type="GO" id="GO:0005654">
    <property type="term" value="C:nucleoplasm"/>
    <property type="evidence" value="ECO:0007669"/>
    <property type="project" value="Ensembl"/>
</dbReference>
<dbReference type="GO" id="GO:0005634">
    <property type="term" value="C:nucleus"/>
    <property type="evidence" value="ECO:0000314"/>
    <property type="project" value="MGI"/>
</dbReference>
<dbReference type="GO" id="GO:0005886">
    <property type="term" value="C:plasma membrane"/>
    <property type="evidence" value="ECO:0007669"/>
    <property type="project" value="Ensembl"/>
</dbReference>
<dbReference type="GO" id="GO:0032993">
    <property type="term" value="C:protein-DNA complex"/>
    <property type="evidence" value="ECO:0007669"/>
    <property type="project" value="Ensembl"/>
</dbReference>
<dbReference type="GO" id="GO:1990904">
    <property type="term" value="C:ribonucleoprotein complex"/>
    <property type="evidence" value="ECO:0000250"/>
    <property type="project" value="UniProtKB"/>
</dbReference>
<dbReference type="GO" id="GO:0090734">
    <property type="term" value="C:site of DNA damage"/>
    <property type="evidence" value="ECO:0000250"/>
    <property type="project" value="UniProtKB"/>
</dbReference>
<dbReference type="GO" id="GO:0032040">
    <property type="term" value="C:small-subunit processome"/>
    <property type="evidence" value="ECO:0000250"/>
    <property type="project" value="UniProtKB"/>
</dbReference>
<dbReference type="GO" id="GO:0051575">
    <property type="term" value="F:5'-deoxyribose-5-phosphate lyase activity"/>
    <property type="evidence" value="ECO:0007669"/>
    <property type="project" value="Ensembl"/>
</dbReference>
<dbReference type="GO" id="GO:0005524">
    <property type="term" value="F:ATP binding"/>
    <property type="evidence" value="ECO:0007669"/>
    <property type="project" value="UniProtKB-KW"/>
</dbReference>
<dbReference type="GO" id="GO:0016887">
    <property type="term" value="F:ATP hydrolysis activity"/>
    <property type="evidence" value="ECO:0007669"/>
    <property type="project" value="Ensembl"/>
</dbReference>
<dbReference type="GO" id="GO:0003684">
    <property type="term" value="F:damaged DNA binding"/>
    <property type="evidence" value="ECO:0007669"/>
    <property type="project" value="InterPro"/>
</dbReference>
<dbReference type="GO" id="GO:0045027">
    <property type="term" value="F:DNA end binding"/>
    <property type="evidence" value="ECO:0007669"/>
    <property type="project" value="Ensembl"/>
</dbReference>
<dbReference type="GO" id="GO:0003678">
    <property type="term" value="F:DNA helicase activity"/>
    <property type="evidence" value="ECO:0007669"/>
    <property type="project" value="InterPro"/>
</dbReference>
<dbReference type="GO" id="GO:0003691">
    <property type="term" value="F:double-stranded telomeric DNA binding"/>
    <property type="evidence" value="ECO:0007669"/>
    <property type="project" value="Ensembl"/>
</dbReference>
<dbReference type="GO" id="GO:0044877">
    <property type="term" value="F:protein-containing complex binding"/>
    <property type="evidence" value="ECO:0007669"/>
    <property type="project" value="Ensembl"/>
</dbReference>
<dbReference type="GO" id="GO:0003723">
    <property type="term" value="F:RNA binding"/>
    <property type="evidence" value="ECO:0000250"/>
    <property type="project" value="UniProtKB"/>
</dbReference>
<dbReference type="GO" id="GO:0000976">
    <property type="term" value="F:transcription cis-regulatory region binding"/>
    <property type="evidence" value="ECO:0007669"/>
    <property type="project" value="Ensembl"/>
</dbReference>
<dbReference type="GO" id="GO:0034511">
    <property type="term" value="F:U3 snoRNA binding"/>
    <property type="evidence" value="ECO:0000250"/>
    <property type="project" value="UniProtKB"/>
</dbReference>
<dbReference type="GO" id="GO:0031625">
    <property type="term" value="F:ubiquitin protein ligase binding"/>
    <property type="evidence" value="ECO:0007669"/>
    <property type="project" value="Ensembl"/>
</dbReference>
<dbReference type="GO" id="GO:0002218">
    <property type="term" value="P:activation of innate immune response"/>
    <property type="evidence" value="ECO:0007669"/>
    <property type="project" value="Ensembl"/>
</dbReference>
<dbReference type="GO" id="GO:0071480">
    <property type="term" value="P:cellular response to gamma radiation"/>
    <property type="evidence" value="ECO:0000250"/>
    <property type="project" value="UniProtKB"/>
</dbReference>
<dbReference type="GO" id="GO:1990830">
    <property type="term" value="P:cellular response to leukemia inhibitory factor"/>
    <property type="evidence" value="ECO:0000270"/>
    <property type="project" value="MGI"/>
</dbReference>
<dbReference type="GO" id="GO:0006974">
    <property type="term" value="P:DNA damage response"/>
    <property type="evidence" value="ECO:0000250"/>
    <property type="project" value="UniProtKB"/>
</dbReference>
<dbReference type="GO" id="GO:0006302">
    <property type="term" value="P:double-strand break repair"/>
    <property type="evidence" value="ECO:0000315"/>
    <property type="project" value="MGI"/>
</dbReference>
<dbReference type="GO" id="GO:0006303">
    <property type="term" value="P:double-strand break repair via nonhomologous end joining"/>
    <property type="evidence" value="ECO:0000250"/>
    <property type="project" value="UniProtKB"/>
</dbReference>
<dbReference type="GO" id="GO:0060218">
    <property type="term" value="P:hematopoietic stem cell differentiation"/>
    <property type="evidence" value="ECO:0000315"/>
    <property type="project" value="MGI"/>
</dbReference>
<dbReference type="GO" id="GO:0071425">
    <property type="term" value="P:hematopoietic stem cell proliferation"/>
    <property type="evidence" value="ECO:0000315"/>
    <property type="project" value="MGI"/>
</dbReference>
<dbReference type="GO" id="GO:0045087">
    <property type="term" value="P:innate immune response"/>
    <property type="evidence" value="ECO:0007669"/>
    <property type="project" value="UniProtKB-KW"/>
</dbReference>
<dbReference type="GO" id="GO:0045892">
    <property type="term" value="P:negative regulation of DNA-templated transcription"/>
    <property type="evidence" value="ECO:0000250"/>
    <property type="project" value="UniProtKB"/>
</dbReference>
<dbReference type="GO" id="GO:1904430">
    <property type="term" value="P:negative regulation of t-circle formation"/>
    <property type="evidence" value="ECO:0007669"/>
    <property type="project" value="Ensembl"/>
</dbReference>
<dbReference type="GO" id="GO:0022008">
    <property type="term" value="P:neurogenesis"/>
    <property type="evidence" value="ECO:0000315"/>
    <property type="project" value="MGI"/>
</dbReference>
<dbReference type="GO" id="GO:0050769">
    <property type="term" value="P:positive regulation of neurogenesis"/>
    <property type="evidence" value="ECO:0000315"/>
    <property type="project" value="MGI"/>
</dbReference>
<dbReference type="GO" id="GO:0070198">
    <property type="term" value="P:protein localization to chromosome, telomeric region"/>
    <property type="evidence" value="ECO:0007669"/>
    <property type="project" value="Ensembl"/>
</dbReference>
<dbReference type="GO" id="GO:0000725">
    <property type="term" value="P:recombinational repair"/>
    <property type="evidence" value="ECO:0000303"/>
    <property type="project" value="ComplexPortal"/>
</dbReference>
<dbReference type="GO" id="GO:0048660">
    <property type="term" value="P:regulation of smooth muscle cell proliferation"/>
    <property type="evidence" value="ECO:0000250"/>
    <property type="project" value="UniProtKB"/>
</dbReference>
<dbReference type="GO" id="GO:0034462">
    <property type="term" value="P:small-subunit processome assembly"/>
    <property type="evidence" value="ECO:0000250"/>
    <property type="project" value="UniProtKB"/>
</dbReference>
<dbReference type="GO" id="GO:0007004">
    <property type="term" value="P:telomere maintenance via telomerase"/>
    <property type="evidence" value="ECO:0007669"/>
    <property type="project" value="Ensembl"/>
</dbReference>
<dbReference type="CDD" id="cd00873">
    <property type="entry name" value="KU80"/>
    <property type="match status" value="1"/>
</dbReference>
<dbReference type="CDD" id="cd01458">
    <property type="entry name" value="vWA_ku"/>
    <property type="match status" value="1"/>
</dbReference>
<dbReference type="FunFam" id="1.10.1600.10:FF:000002">
    <property type="entry name" value="X-ray repair cross-complementing protein 5"/>
    <property type="match status" value="1"/>
</dbReference>
<dbReference type="FunFam" id="1.25.40.240:FF:000001">
    <property type="entry name" value="X-ray repair cross-complementing protein 5"/>
    <property type="match status" value="1"/>
</dbReference>
<dbReference type="FunFam" id="2.40.290.10:FF:000005">
    <property type="entry name" value="X-ray repair cross-complementing protein 5"/>
    <property type="match status" value="1"/>
</dbReference>
<dbReference type="FunFam" id="3.40.50.410:FF:000055">
    <property type="entry name" value="X-ray repair cross-complementing protein 5"/>
    <property type="match status" value="1"/>
</dbReference>
<dbReference type="Gene3D" id="1.10.1600.10">
    <property type="match status" value="1"/>
</dbReference>
<dbReference type="Gene3D" id="2.40.290.10">
    <property type="match status" value="1"/>
</dbReference>
<dbReference type="Gene3D" id="1.25.40.240">
    <property type="entry name" value="Ku, C-terminal domain"/>
    <property type="match status" value="1"/>
</dbReference>
<dbReference type="Gene3D" id="3.40.50.410">
    <property type="entry name" value="von Willebrand factor, type A domain"/>
    <property type="match status" value="1"/>
</dbReference>
<dbReference type="InterPro" id="IPR006164">
    <property type="entry name" value="Ku70/Ku80_beta-barrel_dom"/>
</dbReference>
<dbReference type="InterPro" id="IPR024193">
    <property type="entry name" value="Ku80"/>
</dbReference>
<dbReference type="InterPro" id="IPR005160">
    <property type="entry name" value="Ku_C"/>
</dbReference>
<dbReference type="InterPro" id="IPR036494">
    <property type="entry name" value="Ku_C_sf"/>
</dbReference>
<dbReference type="InterPro" id="IPR005161">
    <property type="entry name" value="Ku_N"/>
</dbReference>
<dbReference type="InterPro" id="IPR014893">
    <property type="entry name" value="Ku_PK_bind"/>
</dbReference>
<dbReference type="InterPro" id="IPR016194">
    <property type="entry name" value="SPOC-like_C_dom_sf"/>
</dbReference>
<dbReference type="InterPro" id="IPR036465">
    <property type="entry name" value="vWFA_dom_sf"/>
</dbReference>
<dbReference type="PANTHER" id="PTHR12604">
    <property type="entry name" value="KU AUTOANTIGEN DNA HELICASE"/>
    <property type="match status" value="1"/>
</dbReference>
<dbReference type="PANTHER" id="PTHR12604:SF4">
    <property type="entry name" value="X-RAY REPAIR CROSS-COMPLEMENTING PROTEIN 5"/>
    <property type="match status" value="1"/>
</dbReference>
<dbReference type="Pfam" id="PF02735">
    <property type="entry name" value="Ku"/>
    <property type="match status" value="1"/>
</dbReference>
<dbReference type="Pfam" id="PF03730">
    <property type="entry name" value="Ku_C"/>
    <property type="match status" value="1"/>
</dbReference>
<dbReference type="Pfam" id="PF03731">
    <property type="entry name" value="Ku_N"/>
    <property type="match status" value="1"/>
</dbReference>
<dbReference type="Pfam" id="PF08785">
    <property type="entry name" value="Ku_PK_bind"/>
    <property type="match status" value="1"/>
</dbReference>
<dbReference type="PIRSF" id="PIRSF016570">
    <property type="entry name" value="Ku80"/>
    <property type="match status" value="1"/>
</dbReference>
<dbReference type="SMART" id="SM00559">
    <property type="entry name" value="Ku78"/>
    <property type="match status" value="1"/>
</dbReference>
<dbReference type="SUPFAM" id="SSF101420">
    <property type="entry name" value="C-terminal domain of Ku80"/>
    <property type="match status" value="1"/>
</dbReference>
<dbReference type="SUPFAM" id="SSF100939">
    <property type="entry name" value="SPOC domain-like"/>
    <property type="match status" value="1"/>
</dbReference>
<dbReference type="SUPFAM" id="SSF53300">
    <property type="entry name" value="vWA-like"/>
    <property type="match status" value="1"/>
</dbReference>
<name>XRCC5_MOUSE</name>
<evidence type="ECO:0000250" key="1">
    <source>
        <dbReference type="UniProtKB" id="P13010"/>
    </source>
</evidence>
<evidence type="ECO:0000250" key="2">
    <source>
        <dbReference type="UniProtKB" id="Q6DDS9"/>
    </source>
</evidence>
<evidence type="ECO:0000255" key="3"/>
<evidence type="ECO:0000255" key="4">
    <source>
        <dbReference type="PROSITE-ProRule" id="PRU00219"/>
    </source>
</evidence>
<evidence type="ECO:0000256" key="5">
    <source>
        <dbReference type="SAM" id="MobiDB-lite"/>
    </source>
</evidence>
<evidence type="ECO:0000269" key="6">
    <source>
    </source>
</evidence>
<evidence type="ECO:0000269" key="7">
    <source>
    </source>
</evidence>
<evidence type="ECO:0000269" key="8">
    <source>
    </source>
</evidence>
<evidence type="ECO:0000305" key="9"/>
<keyword id="KW-0007">Acetylation</keyword>
<keyword id="KW-0010">Activator</keyword>
<keyword id="KW-0013">ADP-ribosylation</keyword>
<keyword id="KW-0067">ATP-binding</keyword>
<keyword id="KW-0158">Chromosome</keyword>
<keyword id="KW-0227">DNA damage</keyword>
<keyword id="KW-0233">DNA recombination</keyword>
<keyword id="KW-0234">DNA repair</keyword>
<keyword id="KW-0238">DNA-binding</keyword>
<keyword id="KW-0347">Helicase</keyword>
<keyword id="KW-0378">Hydrolase</keyword>
<keyword id="KW-0391">Immunity</keyword>
<keyword id="KW-0399">Innate immunity</keyword>
<keyword id="KW-1017">Isopeptide bond</keyword>
<keyword id="KW-0547">Nucleotide-binding</keyword>
<keyword id="KW-0539">Nucleus</keyword>
<keyword id="KW-0597">Phosphoprotein</keyword>
<keyword id="KW-1185">Reference proteome</keyword>
<keyword id="KW-0690">Ribosome biogenesis</keyword>
<keyword id="KW-0804">Transcription</keyword>
<keyword id="KW-0805">Transcription regulation</keyword>
<keyword id="KW-0832">Ubl conjugation</keyword>
<organism>
    <name type="scientific">Mus musculus</name>
    <name type="common">Mouse</name>
    <dbReference type="NCBI Taxonomy" id="10090"/>
    <lineage>
        <taxon>Eukaryota</taxon>
        <taxon>Metazoa</taxon>
        <taxon>Chordata</taxon>
        <taxon>Craniata</taxon>
        <taxon>Vertebrata</taxon>
        <taxon>Euteleostomi</taxon>
        <taxon>Mammalia</taxon>
        <taxon>Eutheria</taxon>
        <taxon>Euarchontoglires</taxon>
        <taxon>Glires</taxon>
        <taxon>Rodentia</taxon>
        <taxon>Myomorpha</taxon>
        <taxon>Muroidea</taxon>
        <taxon>Muridae</taxon>
        <taxon>Murinae</taxon>
        <taxon>Mus</taxon>
        <taxon>Mus</taxon>
    </lineage>
</organism>
<proteinExistence type="evidence at protein level"/>
<feature type="chain" id="PRO_0000084341" description="X-ray repair cross-complementing protein 5">
    <location>
        <begin position="1"/>
        <end position="732"/>
    </location>
</feature>
<feature type="domain" description="VWFA" evidence="4">
    <location>
        <begin position="9"/>
        <end position="161"/>
    </location>
</feature>
<feature type="domain" description="Ku" evidence="3">
    <location>
        <begin position="253"/>
        <end position="453"/>
    </location>
</feature>
<feature type="region of interest" description="Leucine-zipper">
    <location>
        <begin position="138"/>
        <end position="165"/>
    </location>
</feature>
<feature type="region of interest" description="Disordered" evidence="5">
    <location>
        <begin position="708"/>
        <end position="732"/>
    </location>
</feature>
<feature type="short sequence motif" description="EEXXXDL motif">
    <location>
        <begin position="720"/>
        <end position="728"/>
    </location>
</feature>
<feature type="compositionally biased region" description="Acidic residues" evidence="5">
    <location>
        <begin position="717"/>
        <end position="732"/>
    </location>
</feature>
<feature type="modified residue" description="Phosphoserine" evidence="1">
    <location>
        <position position="258"/>
    </location>
</feature>
<feature type="modified residue" description="N6-acetyllysine" evidence="1">
    <location>
        <position position="265"/>
    </location>
</feature>
<feature type="modified residue" description="Phosphoserine" evidence="1">
    <location>
        <position position="318"/>
    </location>
</feature>
<feature type="modified residue" description="N6-acetyllysine" evidence="1">
    <location>
        <position position="332"/>
    </location>
</feature>
<feature type="modified residue" description="Phosphothreonine" evidence="1">
    <location>
        <position position="535"/>
    </location>
</feature>
<feature type="modified residue" description="Phosphoserine; by PRKDC" evidence="1">
    <location>
        <position position="578"/>
    </location>
</feature>
<feature type="modified residue" description="Phosphoserine; by PRKDC" evidence="1">
    <location>
        <position position="580"/>
    </location>
</feature>
<feature type="modified residue" description="Phosphoserine; by PRKDC" evidence="1">
    <location>
        <position position="581"/>
    </location>
</feature>
<feature type="modified residue" description="N6-acetyllysine" evidence="1">
    <location>
        <position position="666"/>
    </location>
</feature>
<feature type="modified residue" description="Phosphothreonine; by PRKDC" evidence="1">
    <location>
        <position position="716"/>
    </location>
</feature>
<feature type="cross-link" description="Glycyl lysine isopeptide (Lys-Gly) (interchain with G-Cter in SUMO2)" evidence="1">
    <location>
        <position position="195"/>
    </location>
</feature>
<feature type="cross-link" description="Glycyl lysine isopeptide (Lys-Gly) (interchain with G-Cter in SUMO2)" evidence="1">
    <location>
        <position position="532"/>
    </location>
</feature>
<feature type="cross-link" description="Glycyl lysine isopeptide (Lys-Gly) (interchain with G-Cter in SUMO2)" evidence="1">
    <location>
        <position position="534"/>
    </location>
</feature>
<feature type="cross-link" description="Glycyl lysine isopeptide (Lys-Gly) (interchain with G-Cter in SUMO2)" evidence="1">
    <location>
        <position position="567"/>
    </location>
</feature>
<feature type="cross-link" description="Glycyl lysine isopeptide (Lys-Gly) (interchain with G-Cter in SUMO2)" evidence="1">
    <location>
        <position position="569"/>
    </location>
</feature>
<feature type="cross-link" description="Glycyl lysine isopeptide (Lys-Gly) (interchain with G-Cter in SUMO2)" evidence="1">
    <location>
        <position position="670"/>
    </location>
</feature>
<feature type="cross-link" description="Glycyl lysine isopeptide (Lys-Gly) (interchain with G-Cter in SUMO2)" evidence="1">
    <location>
        <position position="689"/>
    </location>
</feature>
<feature type="sequence conflict" description="In Ref. 1; CAA46999." evidence="9" ref="1">
    <original>G</original>
    <variation>V</variation>
    <location>
        <position position="5"/>
    </location>
</feature>
<feature type="sequence conflict" description="In Ref. 1; CAA46999." evidence="9" ref="1">
    <original>F</original>
    <variation>I</variation>
    <location>
        <position position="24"/>
    </location>
</feature>
<feature type="sequence conflict" description="In Ref. 1; CAA46999." evidence="9" ref="1">
    <original>V</original>
    <variation>A</variation>
    <location>
        <position position="57"/>
    </location>
</feature>
<feature type="sequence conflict" description="In Ref. 1; CAA46999." evidence="9" ref="1">
    <original>NALA</original>
    <variation>MPLS</variation>
    <location>
        <begin position="66"/>
        <end position="69"/>
    </location>
</feature>
<feature type="sequence conflict" description="In Ref. 2; AAD49720." evidence="9" ref="2">
    <original>R</original>
    <variation>H</variation>
    <location>
        <position position="120"/>
    </location>
</feature>
<feature type="sequence conflict" description="In Ref. 3; BAE38207." evidence="9" ref="3">
    <original>S</original>
    <variation>G</variation>
    <location>
        <position position="139"/>
    </location>
</feature>
<feature type="sequence conflict" description="In Ref. 1; CAA46999." evidence="9" ref="1">
    <original>S</original>
    <variation>R</variation>
    <location>
        <position position="139"/>
    </location>
</feature>
<feature type="sequence conflict" description="In Ref. 1; CAA46999." evidence="9" ref="1">
    <original>Q</original>
    <variation>K</variation>
    <location>
        <position position="144"/>
    </location>
</feature>
<feature type="sequence conflict" description="In Ref. 1; CAA46999." evidence="9" ref="1">
    <original>S</original>
    <variation>C</variation>
    <location>
        <position position="157"/>
    </location>
</feature>
<feature type="sequence conflict" description="In Ref. 2; AAD49720." evidence="9" ref="2">
    <original>S</original>
    <variation>F</variation>
    <location>
        <position position="226"/>
    </location>
</feature>
<feature type="sequence conflict" description="In Ref. 1; CAA46999." evidence="9" ref="1">
    <original>FP</original>
    <variation>SL</variation>
    <location>
        <begin position="409"/>
        <end position="410"/>
    </location>
</feature>
<feature type="sequence conflict" description="In Ref. 3; BAC38276." evidence="9" ref="3">
    <original>D</original>
    <variation>G</variation>
    <location>
        <position position="414"/>
    </location>
</feature>
<feature type="sequence conflict" description="In Ref. 2; AAD49720." evidence="9" ref="2">
    <original>A</original>
    <variation>T</variation>
    <location>
        <position position="415"/>
    </location>
</feature>
<feature type="sequence conflict" description="In Ref. 1; CAA46999." evidence="9" ref="1">
    <original>C</original>
    <variation>R</variation>
    <location>
        <position position="418"/>
    </location>
</feature>
<feature type="sequence conflict" description="In Ref. 2; AAD49720." evidence="9" ref="2">
    <original>K</original>
    <variation>M</variation>
    <location>
        <position position="442"/>
    </location>
</feature>
<feature type="sequence conflict" description="In Ref. 1; CAA46999." evidence="9" ref="1">
    <original>T</original>
    <variation>A</variation>
    <location>
        <position position="479"/>
    </location>
</feature>
<feature type="sequence conflict" description="In Ref. 1; CAA46999." evidence="9" ref="1">
    <original>ML</original>
    <variation>IW</variation>
    <location>
        <begin position="515"/>
        <end position="516"/>
    </location>
</feature>
<feature type="sequence conflict" description="In Ref. 1; CAA46999." evidence="9" ref="1">
    <original>A</original>
    <variation>Q</variation>
    <location>
        <position position="524"/>
    </location>
</feature>
<feature type="sequence conflict" description="In Ref. 1; CAA46999." evidence="9" ref="1">
    <original>LS</original>
    <variation>PL</variation>
    <location>
        <begin position="530"/>
        <end position="531"/>
    </location>
</feature>
<feature type="sequence conflict" description="In Ref. 2; AAD49720." evidence="9" ref="2">
    <original>N</original>
    <variation>H</variation>
    <location>
        <position position="558"/>
    </location>
</feature>
<feature type="sequence conflict" description="In Ref. 1; CAA46999." evidence="9" ref="1">
    <original>G</original>
    <variation>A</variation>
    <location>
        <position position="692"/>
    </location>
</feature>
<feature type="sequence conflict" description="In Ref. 1; CAA46999." evidence="9" ref="1">
    <original>T</original>
    <variation>K</variation>
    <location>
        <position position="703"/>
    </location>
</feature>
<feature type="sequence conflict" description="In Ref. 3; BAE39415." evidence="9" ref="3">
    <original>P</original>
    <variation>H</variation>
    <location>
        <position position="708"/>
    </location>
</feature>
<sequence length="732" mass="83057">MAWSGNKAAVVLCVDVGVAMGNSFPGEESPIEQAKKVMTMFVQRQVFSESKDEIALVLYGTDGTDNALAGKDQYQNITVCRHLMLPDFDLLEDIGNKIQPSSQQADFLDALIVCMDLIQRETIGKKFGKKHIEVFTDLSSPFSQDQLDVIICNLKKSGISLQFFLPFPIDKNGEPGERGDLDSGLDHLKPSFPQKGLTEQQKEGIRMVTRVMLSLEGEDGLDEIYSFSESLRQLCVFKKIERRSMPWPCQLTIGPNLSIKIVAYKSIVQEKFKKSWVVVDARTLKKEDIQKETVYCLNDDDETEVSKEDTIQGYRYGSDIIPFSKVDEEQMKYKSEGKCFSVLGFCKSSQVHRRFFMGHQVLKVFAAKDDEAAAVALSSLVHALDELNMVAIVRYAYDKRSNPQVGVAFPYIKDAYECLVYVQLPFMEDLRQYMFSSLKNNKKCTPTEAQLSAIDDLIDSMSLVKKNEEEDIVEDLFPTSKIPNPEFQRLYQCLLHRALHLQERLPPIQQHILNMLDPPTEMKAKCESPLSKVKTLFPLTEVIKKKNQVTAQDVFQDNHEEGPAAKKYKTEKEEDHISISSLAEGNITKVGSVNPVENFRFLVRQKIASFEEASLQLISHIEQFLDTNETLYFMKSMDCIKAFREEAIQFSEEQRFNSFLEALREKVEIKQLNHFWEIVVQDGVTLITKDEGPGSSITAEEATKFLAPKDKAKEDTTGPEEAGDVDDLLDMI</sequence>
<reference key="1">
    <citation type="journal article" date="1992" name="Nucleic Acids Res.">
        <title>The nucleotide sequence of a mouse cDNA encoding the 80 kDa subunit of the Ku (p70/p80) autoantigen.</title>
        <authorList>
            <person name="Falzon M."/>
            <person name="Kuff E.L."/>
        </authorList>
    </citation>
    <scope>NUCLEOTIDE SEQUENCE [MRNA]</scope>
    <source>
        <strain>BALB/cJ</strain>
    </source>
</reference>
<reference key="2">
    <citation type="submission" date="1999-07" db="EMBL/GenBank/DDBJ databases">
        <title>Ku gene mutation of radiosensitive mouse mammary carcinoma cell line SX-9.</title>
        <authorList>
            <person name="Jiang G.C."/>
            <person name="Yuan L.Z."/>
            <person name="Wei K."/>
        </authorList>
    </citation>
    <scope>NUCLEOTIDE SEQUENCE [MRNA]</scope>
    <source>
        <tissue>Mammary carcinoma</tissue>
    </source>
</reference>
<reference key="3">
    <citation type="journal article" date="2005" name="Science">
        <title>The transcriptional landscape of the mammalian genome.</title>
        <authorList>
            <person name="Carninci P."/>
            <person name="Kasukawa T."/>
            <person name="Katayama S."/>
            <person name="Gough J."/>
            <person name="Frith M.C."/>
            <person name="Maeda N."/>
            <person name="Oyama R."/>
            <person name="Ravasi T."/>
            <person name="Lenhard B."/>
            <person name="Wells C."/>
            <person name="Kodzius R."/>
            <person name="Shimokawa K."/>
            <person name="Bajic V.B."/>
            <person name="Brenner S.E."/>
            <person name="Batalov S."/>
            <person name="Forrest A.R."/>
            <person name="Zavolan M."/>
            <person name="Davis M.J."/>
            <person name="Wilming L.G."/>
            <person name="Aidinis V."/>
            <person name="Allen J.E."/>
            <person name="Ambesi-Impiombato A."/>
            <person name="Apweiler R."/>
            <person name="Aturaliya R.N."/>
            <person name="Bailey T.L."/>
            <person name="Bansal M."/>
            <person name="Baxter L."/>
            <person name="Beisel K.W."/>
            <person name="Bersano T."/>
            <person name="Bono H."/>
            <person name="Chalk A.M."/>
            <person name="Chiu K.P."/>
            <person name="Choudhary V."/>
            <person name="Christoffels A."/>
            <person name="Clutterbuck D.R."/>
            <person name="Crowe M.L."/>
            <person name="Dalla E."/>
            <person name="Dalrymple B.P."/>
            <person name="de Bono B."/>
            <person name="Della Gatta G."/>
            <person name="di Bernardo D."/>
            <person name="Down T."/>
            <person name="Engstrom P."/>
            <person name="Fagiolini M."/>
            <person name="Faulkner G."/>
            <person name="Fletcher C.F."/>
            <person name="Fukushima T."/>
            <person name="Furuno M."/>
            <person name="Futaki S."/>
            <person name="Gariboldi M."/>
            <person name="Georgii-Hemming P."/>
            <person name="Gingeras T.R."/>
            <person name="Gojobori T."/>
            <person name="Green R.E."/>
            <person name="Gustincich S."/>
            <person name="Harbers M."/>
            <person name="Hayashi Y."/>
            <person name="Hensch T.K."/>
            <person name="Hirokawa N."/>
            <person name="Hill D."/>
            <person name="Huminiecki L."/>
            <person name="Iacono M."/>
            <person name="Ikeo K."/>
            <person name="Iwama A."/>
            <person name="Ishikawa T."/>
            <person name="Jakt M."/>
            <person name="Kanapin A."/>
            <person name="Katoh M."/>
            <person name="Kawasawa Y."/>
            <person name="Kelso J."/>
            <person name="Kitamura H."/>
            <person name="Kitano H."/>
            <person name="Kollias G."/>
            <person name="Krishnan S.P."/>
            <person name="Kruger A."/>
            <person name="Kummerfeld S.K."/>
            <person name="Kurochkin I.V."/>
            <person name="Lareau L.F."/>
            <person name="Lazarevic D."/>
            <person name="Lipovich L."/>
            <person name="Liu J."/>
            <person name="Liuni S."/>
            <person name="McWilliam S."/>
            <person name="Madan Babu M."/>
            <person name="Madera M."/>
            <person name="Marchionni L."/>
            <person name="Matsuda H."/>
            <person name="Matsuzawa S."/>
            <person name="Miki H."/>
            <person name="Mignone F."/>
            <person name="Miyake S."/>
            <person name="Morris K."/>
            <person name="Mottagui-Tabar S."/>
            <person name="Mulder N."/>
            <person name="Nakano N."/>
            <person name="Nakauchi H."/>
            <person name="Ng P."/>
            <person name="Nilsson R."/>
            <person name="Nishiguchi S."/>
            <person name="Nishikawa S."/>
            <person name="Nori F."/>
            <person name="Ohara O."/>
            <person name="Okazaki Y."/>
            <person name="Orlando V."/>
            <person name="Pang K.C."/>
            <person name="Pavan W.J."/>
            <person name="Pavesi G."/>
            <person name="Pesole G."/>
            <person name="Petrovsky N."/>
            <person name="Piazza S."/>
            <person name="Reed J."/>
            <person name="Reid J.F."/>
            <person name="Ring B.Z."/>
            <person name="Ringwald M."/>
            <person name="Rost B."/>
            <person name="Ruan Y."/>
            <person name="Salzberg S.L."/>
            <person name="Sandelin A."/>
            <person name="Schneider C."/>
            <person name="Schoenbach C."/>
            <person name="Sekiguchi K."/>
            <person name="Semple C.A."/>
            <person name="Seno S."/>
            <person name="Sessa L."/>
            <person name="Sheng Y."/>
            <person name="Shibata Y."/>
            <person name="Shimada H."/>
            <person name="Shimada K."/>
            <person name="Silva D."/>
            <person name="Sinclair B."/>
            <person name="Sperling S."/>
            <person name="Stupka E."/>
            <person name="Sugiura K."/>
            <person name="Sultana R."/>
            <person name="Takenaka Y."/>
            <person name="Taki K."/>
            <person name="Tammoja K."/>
            <person name="Tan S.L."/>
            <person name="Tang S."/>
            <person name="Taylor M.S."/>
            <person name="Tegner J."/>
            <person name="Teichmann S.A."/>
            <person name="Ueda H.R."/>
            <person name="van Nimwegen E."/>
            <person name="Verardo R."/>
            <person name="Wei C.L."/>
            <person name="Yagi K."/>
            <person name="Yamanishi H."/>
            <person name="Zabarovsky E."/>
            <person name="Zhu S."/>
            <person name="Zimmer A."/>
            <person name="Hide W."/>
            <person name="Bult C."/>
            <person name="Grimmond S.M."/>
            <person name="Teasdale R.D."/>
            <person name="Liu E.T."/>
            <person name="Brusic V."/>
            <person name="Quackenbush J."/>
            <person name="Wahlestedt C."/>
            <person name="Mattick J.S."/>
            <person name="Hume D.A."/>
            <person name="Kai C."/>
            <person name="Sasaki D."/>
            <person name="Tomaru Y."/>
            <person name="Fukuda S."/>
            <person name="Kanamori-Katayama M."/>
            <person name="Suzuki M."/>
            <person name="Aoki J."/>
            <person name="Arakawa T."/>
            <person name="Iida J."/>
            <person name="Imamura K."/>
            <person name="Itoh M."/>
            <person name="Kato T."/>
            <person name="Kawaji H."/>
            <person name="Kawagashira N."/>
            <person name="Kawashima T."/>
            <person name="Kojima M."/>
            <person name="Kondo S."/>
            <person name="Konno H."/>
            <person name="Nakano K."/>
            <person name="Ninomiya N."/>
            <person name="Nishio T."/>
            <person name="Okada M."/>
            <person name="Plessy C."/>
            <person name="Shibata K."/>
            <person name="Shiraki T."/>
            <person name="Suzuki S."/>
            <person name="Tagami M."/>
            <person name="Waki K."/>
            <person name="Watahiki A."/>
            <person name="Okamura-Oho Y."/>
            <person name="Suzuki H."/>
            <person name="Kawai J."/>
            <person name="Hayashizaki Y."/>
        </authorList>
    </citation>
    <scope>NUCLEOTIDE SEQUENCE [LARGE SCALE MRNA]</scope>
    <source>
        <strain>C57BL/6J</strain>
        <strain>NOD</strain>
        <tissue>Embryonic head</tissue>
        <tissue>Embryonic heart</tissue>
        <tissue>Embryonic liver</tissue>
        <tissue>Kidney</tissue>
        <tissue>Thymus</tissue>
    </source>
</reference>
<reference key="4">
    <citation type="journal article" date="2004" name="Genome Res.">
        <title>The status, quality, and expansion of the NIH full-length cDNA project: the Mammalian Gene Collection (MGC).</title>
        <authorList>
            <consortium name="The MGC Project Team"/>
        </authorList>
    </citation>
    <scope>NUCLEOTIDE SEQUENCE [LARGE SCALE MRNA]</scope>
    <source>
        <strain>129/Sv X 129SvCp</strain>
        <strain>FVB/N</strain>
        <tissue>Embryonic stem cell</tissue>
        <tissue>Mammary tumor</tissue>
    </source>
</reference>
<reference key="5">
    <citation type="journal article" date="1996" name="FEBS Lett.">
        <title>Non-histone protein 1 (NHP1) is a member of the Ku protein family which is upregulated in differentiating mouse myoblasts and human promyelocytes.</title>
        <authorList>
            <person name="Oderwald H."/>
            <person name="Hughes M.J."/>
            <person name="Jost J.-P."/>
        </authorList>
    </citation>
    <scope>DEVELOPMENTAL STAGE</scope>
    <scope>INDUCTION</scope>
</reference>
<reference key="6">
    <citation type="journal article" date="2010" name="Cell">
        <title>A tissue-specific atlas of mouse protein phosphorylation and expression.</title>
        <authorList>
            <person name="Huttlin E.L."/>
            <person name="Jedrychowski M.P."/>
            <person name="Elias J.E."/>
            <person name="Goswami T."/>
            <person name="Rad R."/>
            <person name="Beausoleil S.A."/>
            <person name="Villen J."/>
            <person name="Haas W."/>
            <person name="Sowa M.E."/>
            <person name="Gygi S.P."/>
        </authorList>
    </citation>
    <scope>IDENTIFICATION BY MASS SPECTROMETRY [LARGE SCALE ANALYSIS]</scope>
    <source>
        <tissue>Kidney</tissue>
        <tissue>Liver</tissue>
        <tissue>Lung</tissue>
        <tissue>Pancreas</tissue>
        <tissue>Spleen</tissue>
        <tissue>Testis</tissue>
    </source>
</reference>
<reference key="7">
    <citation type="journal article" date="2018" name="Mol. Cell">
        <title>MRI is a DNA damage response adaptor during classical non-homologous end joining.</title>
        <authorList>
            <person name="Hung P.J."/>
            <person name="Johnson B."/>
            <person name="Chen B.R."/>
            <person name="Byrum A.K."/>
            <person name="Bredemeyer A.L."/>
            <person name="Yewdell W.T."/>
            <person name="Johnson T.E."/>
            <person name="Lee B.J."/>
            <person name="Deivasigamani S."/>
            <person name="Hindi I."/>
            <person name="Amatya P."/>
            <person name="Gross M.L."/>
            <person name="Paull T.T."/>
            <person name="Pisapia D.J."/>
            <person name="Chaudhuri J."/>
            <person name="Petrini J.J.H."/>
            <person name="Mosammaparast N."/>
            <person name="Amarasinghe G.K."/>
            <person name="Zha S."/>
            <person name="Tyler J.K."/>
            <person name="Sleckman B.P."/>
        </authorList>
    </citation>
    <scope>INTERACTION WITH CYREN</scope>
</reference>
<reference key="8">
    <citation type="journal article" date="2020" name="Cell Res.">
        <title>ERCC6L2 promotes DNA orientation-specific recombination in mammalian cells.</title>
        <authorList>
            <person name="Liu X."/>
            <person name="Liu T."/>
            <person name="Shang Y."/>
            <person name="Dai P."/>
            <person name="Zhang W."/>
            <person name="Lee B.J."/>
            <person name="Huang M."/>
            <person name="Yang D."/>
            <person name="Wu Q."/>
            <person name="Liu L.D."/>
            <person name="Zheng X."/>
            <person name="Zhou B.O."/>
            <person name="Dong J."/>
            <person name="Yeap L.S."/>
            <person name="Hu J."/>
            <person name="Xiao T."/>
            <person name="Zha S."/>
            <person name="Casellas R."/>
            <person name="Liu X.S."/>
            <person name="Meng F.L."/>
        </authorList>
    </citation>
    <scope>INTERACTION WITH ERCC6L2</scope>
</reference>
<protein>
    <recommendedName>
        <fullName>X-ray repair cross-complementing protein 5</fullName>
        <ecNumber>3.6.4.-</ecNumber>
    </recommendedName>
    <alternativeName>
        <fullName>ATP-dependent DNA helicase 2 subunit 2</fullName>
    </alternativeName>
    <alternativeName>
        <fullName>ATP-dependent DNA helicase II 80 kDa subunit</fullName>
    </alternativeName>
    <alternativeName>
        <fullName>CTC box-binding factor 85 kDa subunit</fullName>
        <shortName>CTC85</shortName>
        <shortName>CTCBF</shortName>
    </alternativeName>
    <alternativeName>
        <fullName>DNA repair protein XRCC5</fullName>
    </alternativeName>
    <alternativeName>
        <fullName>Ku autoantigen protein p86 homolog</fullName>
    </alternativeName>
    <alternativeName>
        <fullName>Ku80</fullName>
    </alternativeName>
    <alternativeName>
        <fullName>Nuclear factor IV</fullName>
    </alternativeName>
</protein>
<accession>P27641</accession>
<accession>Q3TE46</accession>
<accession>Q3TJT0</accession>
<accession>Q3TN82</accession>
<accession>Q80UT1</accession>
<accession>Q8C4N6</accession>
<accession>Q8K1K7</accession>
<accession>Q9R169</accession>
<comment type="function">
    <text evidence="1">Single-stranded DNA-dependent ATP-dependent helicase that plays a key role in DNA non-homologous end joining (NHEJ) by recruiting DNA-PK to DNA. Required for double-strand break repair and V(D)J recombination. Also has a role in chromosome translocation. The DNA helicase II complex binds preferentially to fork-like ends of double-stranded DNA in a cell cycle-dependent manner. It works in the 3'-5' direction. During NHEJ, the XRCC5-XRRC6 dimer performs the recognition step: it recognizes and binds to the broken ends of the DNA and protects them from further resection. Binding to DNA may be mediated by XRCC6. The XRCC5-XRRC6 dimer acts as a regulatory subunit of the DNA-dependent protein kinase complex DNA-PK by increasing the affinity of the catalytic subunit PRKDC to DNA by 100-fold. The XRCC5-XRRC6 dimer is probably involved in stabilizing broken DNA ends and bringing them together. The assembly of the DNA-PK complex to DNA ends is required for the NHEJ ligation step. The XRCC5-XRRC6 dimer probably also acts as a 5'-deoxyribose-5-phosphate lyase (5'-dRP lyase), by catalyzing the beta-elimination of the 5' deoxyribose-5-phosphate at an abasic site near double-strand breaks. XRCC5 probably acts as the catalytic subunit of 5'-dRP activity, and allows to 'clean' the termini of abasic sites, a class of nucleotide damage commonly associated with strand breaks, before such broken ends can be joined. The XRCC5-XRRC6 dimer together with APEX1 acts as a negative regulator of transcription. In association with NAA15, the XRCC5-XRRC6 dimer binds to the osteocalcin promoter and activates osteocalcin expression. As part of the DNA-PK complex, involved in the early steps of ribosome assembly by promoting the processing of precursor rRNA into mature 18S rRNA in the small-subunit processome. Binding to U3 small nucleolar RNA, recruits PRKDC and XRCC5/Ku86 to the small-subunit processome. Plays a role in the regulation of DNA virus-mediated innate immune response by assembling into the HDP-RNP complex, a complex that serves as a platform for IRF3 phosphorylation and subsequent innate immune response activation through the cGAS-STING pathway.</text>
</comment>
<comment type="subunit">
    <text evidence="1 6 7">Heterodimer composed of XRCC5/Ku80 and XRCC6/Ku70 (By similarity). Component of the core long-range non-homologous end joining (NHEJ) complex (also named DNA-PK complex) composed of PRKDC, LIG4, XRCC4, XRCC6/Ku70, XRCC5/Ku86 and NHEJ1/XLF (By similarity). Additional component of the NHEJ complex includes PAXX (By similarity). Following autophosphorylation, PRKDC dissociates from DNA, leading to formation of the short-range NHEJ complex, composed of LIG4, XRCC4, XRCC6/Ku70, XRCC5/Ku86 and NHEJ1/XLF (By similarity). The XRCC5-XRCC6 dimer also associates with NAA15, and this complex displays DNA binding activity towards the osteocalcin FGF response element (OCFRE) (By similarity). In addition, XRCC5 binds to the osteoblast-specific transcription factors MSX2 and RUNX2 (By similarity). Interacts with ELF3 (By similarity). Interacts with APLF (via KBM motif) (By similarity). The XRCC5/XRCC6 dimer associates in a DNA-dependent manner with APEX1 (By similarity). Identified in a complex with DEAF1 and XRCC6 (By similarity). Interacts with NR4A3; the DNA-dependent protein kinase complex DNA-PK phosphorylates and activates NR4A3 and prevents NR4A3 ubiquitinylation and degradation (By similarity). Interacts with RNF138 (By similarity). Interacts with CYREN (via KBM motif) (PubMed:30017584). Interacts with WRN (via KBM motif) (By similarity). Interacts (via N-terminus) with HSF1 (via N-terminus); this interaction is direct and prevents XRCC5/XRCC6 heterodimeric binding and non-homologous end joining (NHEJ) repair activities induced by ionizing radiation (IR) (By similarity). Interacts with DHX9; this interaction occurs in a RNA-dependent manner (By similarity). Part of the HDP-RNP complex composed of at least HEXIM1, PRKDC, XRCC5, XRCC6, paraspeckle proteins (SFPQ, NONO, PSPC1, RBM14, and MATR3) and NEAT1 RNA (By similarity). Interacts with ERCC6 (By similarity). Interacts with ATF7 (By similarity). The XRCC5-XRCC6 dimer associates with ALKBH2. Interacts with TPRN; TPRN interacts with a number of DNA damage response proteins, is recruited to sites of DNA damage and may play a role in DNA damage repair (By similarity). Interacts with ERCC6L2 (PubMed:32355287).</text>
</comment>
<comment type="subcellular location">
    <subcellularLocation>
        <location evidence="1">Nucleus</location>
    </subcellularLocation>
    <subcellularLocation>
        <location evidence="1">Nucleus</location>
        <location evidence="1">Nucleolus</location>
    </subcellularLocation>
    <subcellularLocation>
        <location evidence="1">Chromosome</location>
    </subcellularLocation>
</comment>
<comment type="developmental stage">
    <text evidence="8">Expression increases during promyelocyte differentiation.</text>
</comment>
<comment type="induction">
    <text evidence="8">Up-regulation during myogenesis is inhibited by cAMP, 3-aminobenzamide and sodium butyrate. Expression in myoblasts is unaffected by X-rays and UV light.</text>
</comment>
<comment type="domain">
    <text evidence="1">The EEXXXDDL motif is required for the interaction with catalytic subunit PRKDC and its recruitment to sites of DNA damage.</text>
</comment>
<comment type="domain">
    <text evidence="2">The VWFA domain interacts with the KBM (Ku-binding motif) found in a number of DNA repair proteins.</text>
</comment>
<comment type="domain">
    <text evidence="2">The N-terminal and C-terminal regions are not required for binding to DNA or for degradation of the protein with only the central region being required for these processes.</text>
</comment>
<comment type="PTM">
    <text evidence="1">ADP-ribosylated by PARP3.</text>
</comment>
<comment type="PTM">
    <text evidence="1">Phosphorylated on serine residues. Phosphorylation by PRKDC may enhance helicase activity.</text>
</comment>
<comment type="PTM">
    <text evidence="1">Sumoylated.</text>
</comment>
<comment type="PTM">
    <text evidence="1">Ubiquitinated by RNF8 via 'Lys-48'-linked ubiquitination following DNA damage, leading to its degradation and removal from DNA damage sites. Ubiquitinated by RNF138, leading to remove the Ku complex from DNA breaks.</text>
</comment>
<comment type="similarity">
    <text evidence="9">Belongs to the ku80 family.</text>
</comment>